<proteinExistence type="inferred from homology"/>
<sequence>MVKFYDRDISSRLLIGSALYPSPAIMQDAIRDSGAEIVTVSLRRETAGGKAGDQFWSLIRELGVTVLPNTAGCRSVREAVTTAKLARELFATSWIKLEVIADNDTLQPDVVGLVEAAQILIKDGFEVFPYCTEDLSVALRLVDAGCRVIMPWAAPIGSARGITNRDALKLLRDRLPDITLVVDAGLGAPSHAAEAMELGYDAVLLNTAIAKAEDPVAMARAFRLAVDAGRLGYQAGLMGARDFASPSTPVIGTPFWHAVS</sequence>
<dbReference type="EC" id="2.8.1.10" evidence="1"/>
<dbReference type="EMBL" id="CP000283">
    <property type="protein sequence ID" value="ABE40654.1"/>
    <property type="molecule type" value="Genomic_DNA"/>
</dbReference>
<dbReference type="SMR" id="Q133T5"/>
<dbReference type="STRING" id="316057.RPD_3430"/>
<dbReference type="KEGG" id="rpd:RPD_3430"/>
<dbReference type="eggNOG" id="COG2022">
    <property type="taxonomic scope" value="Bacteria"/>
</dbReference>
<dbReference type="HOGENOM" id="CLU_062233_1_0_5"/>
<dbReference type="BioCyc" id="RPAL316057:RPD_RS17250-MONOMER"/>
<dbReference type="UniPathway" id="UPA00060"/>
<dbReference type="Proteomes" id="UP000001818">
    <property type="component" value="Chromosome"/>
</dbReference>
<dbReference type="GO" id="GO:0005737">
    <property type="term" value="C:cytoplasm"/>
    <property type="evidence" value="ECO:0007669"/>
    <property type="project" value="UniProtKB-SubCell"/>
</dbReference>
<dbReference type="GO" id="GO:1990107">
    <property type="term" value="F:thiazole synthase activity"/>
    <property type="evidence" value="ECO:0007669"/>
    <property type="project" value="UniProtKB-EC"/>
</dbReference>
<dbReference type="GO" id="GO:0009229">
    <property type="term" value="P:thiamine diphosphate biosynthetic process"/>
    <property type="evidence" value="ECO:0007669"/>
    <property type="project" value="UniProtKB-UniRule"/>
</dbReference>
<dbReference type="CDD" id="cd04728">
    <property type="entry name" value="ThiG"/>
    <property type="match status" value="1"/>
</dbReference>
<dbReference type="Gene3D" id="3.20.20.70">
    <property type="entry name" value="Aldolase class I"/>
    <property type="match status" value="1"/>
</dbReference>
<dbReference type="HAMAP" id="MF_00443">
    <property type="entry name" value="ThiG"/>
    <property type="match status" value="1"/>
</dbReference>
<dbReference type="InterPro" id="IPR013785">
    <property type="entry name" value="Aldolase_TIM"/>
</dbReference>
<dbReference type="InterPro" id="IPR033983">
    <property type="entry name" value="Thiazole_synthase_ThiG"/>
</dbReference>
<dbReference type="InterPro" id="IPR008867">
    <property type="entry name" value="ThiG"/>
</dbReference>
<dbReference type="PANTHER" id="PTHR34266">
    <property type="entry name" value="THIAZOLE SYNTHASE"/>
    <property type="match status" value="1"/>
</dbReference>
<dbReference type="PANTHER" id="PTHR34266:SF2">
    <property type="entry name" value="THIAZOLE SYNTHASE"/>
    <property type="match status" value="1"/>
</dbReference>
<dbReference type="Pfam" id="PF05690">
    <property type="entry name" value="ThiG"/>
    <property type="match status" value="1"/>
</dbReference>
<dbReference type="SUPFAM" id="SSF110399">
    <property type="entry name" value="ThiG-like"/>
    <property type="match status" value="1"/>
</dbReference>
<gene>
    <name evidence="1" type="primary">thiG</name>
    <name type="ordered locus">RPD_3430</name>
</gene>
<evidence type="ECO:0000255" key="1">
    <source>
        <dbReference type="HAMAP-Rule" id="MF_00443"/>
    </source>
</evidence>
<keyword id="KW-0963">Cytoplasm</keyword>
<keyword id="KW-0704">Schiff base</keyword>
<keyword id="KW-0784">Thiamine biosynthesis</keyword>
<keyword id="KW-0808">Transferase</keyword>
<organism>
    <name type="scientific">Rhodopseudomonas palustris (strain BisB5)</name>
    <dbReference type="NCBI Taxonomy" id="316057"/>
    <lineage>
        <taxon>Bacteria</taxon>
        <taxon>Pseudomonadati</taxon>
        <taxon>Pseudomonadota</taxon>
        <taxon>Alphaproteobacteria</taxon>
        <taxon>Hyphomicrobiales</taxon>
        <taxon>Nitrobacteraceae</taxon>
        <taxon>Rhodopseudomonas</taxon>
    </lineage>
</organism>
<reference key="1">
    <citation type="submission" date="2006-03" db="EMBL/GenBank/DDBJ databases">
        <title>Complete sequence of Rhodopseudomonas palustris BisB5.</title>
        <authorList>
            <consortium name="US DOE Joint Genome Institute"/>
            <person name="Copeland A."/>
            <person name="Lucas S."/>
            <person name="Lapidus A."/>
            <person name="Barry K."/>
            <person name="Detter J.C."/>
            <person name="Glavina del Rio T."/>
            <person name="Hammon N."/>
            <person name="Israni S."/>
            <person name="Dalin E."/>
            <person name="Tice H."/>
            <person name="Pitluck S."/>
            <person name="Chain P."/>
            <person name="Malfatti S."/>
            <person name="Shin M."/>
            <person name="Vergez L."/>
            <person name="Schmutz J."/>
            <person name="Larimer F."/>
            <person name="Land M."/>
            <person name="Hauser L."/>
            <person name="Pelletier D.A."/>
            <person name="Kyrpides N."/>
            <person name="Lykidis A."/>
            <person name="Oda Y."/>
            <person name="Harwood C.S."/>
            <person name="Richardson P."/>
        </authorList>
    </citation>
    <scope>NUCLEOTIDE SEQUENCE [LARGE SCALE GENOMIC DNA]</scope>
    <source>
        <strain>BisB5</strain>
    </source>
</reference>
<feature type="chain" id="PRO_1000026038" description="Thiazole synthase">
    <location>
        <begin position="1"/>
        <end position="260"/>
    </location>
</feature>
<feature type="active site" description="Schiff-base intermediate with DXP" evidence="1">
    <location>
        <position position="96"/>
    </location>
</feature>
<feature type="binding site" evidence="1">
    <location>
        <position position="157"/>
    </location>
    <ligand>
        <name>1-deoxy-D-xylulose 5-phosphate</name>
        <dbReference type="ChEBI" id="CHEBI:57792"/>
    </ligand>
</feature>
<feature type="binding site" evidence="1">
    <location>
        <begin position="184"/>
        <end position="185"/>
    </location>
    <ligand>
        <name>1-deoxy-D-xylulose 5-phosphate</name>
        <dbReference type="ChEBI" id="CHEBI:57792"/>
    </ligand>
</feature>
<feature type="binding site" evidence="1">
    <location>
        <begin position="206"/>
        <end position="207"/>
    </location>
    <ligand>
        <name>1-deoxy-D-xylulose 5-phosphate</name>
        <dbReference type="ChEBI" id="CHEBI:57792"/>
    </ligand>
</feature>
<name>THIG_RHOPS</name>
<accession>Q133T5</accession>
<protein>
    <recommendedName>
        <fullName evidence="1">Thiazole synthase</fullName>
        <ecNumber evidence="1">2.8.1.10</ecNumber>
    </recommendedName>
</protein>
<comment type="function">
    <text evidence="1">Catalyzes the rearrangement of 1-deoxy-D-xylulose 5-phosphate (DXP) to produce the thiazole phosphate moiety of thiamine. Sulfur is provided by the thiocarboxylate moiety of the carrier protein ThiS. In vitro, sulfur can be provided by H(2)S.</text>
</comment>
<comment type="catalytic activity">
    <reaction evidence="1">
        <text>[ThiS sulfur-carrier protein]-C-terminal-Gly-aminoethanethioate + 2-iminoacetate + 1-deoxy-D-xylulose 5-phosphate = [ThiS sulfur-carrier protein]-C-terminal Gly-Gly + 2-[(2R,5Z)-2-carboxy-4-methylthiazol-5(2H)-ylidene]ethyl phosphate + 2 H2O + H(+)</text>
        <dbReference type="Rhea" id="RHEA:26297"/>
        <dbReference type="Rhea" id="RHEA-COMP:12909"/>
        <dbReference type="Rhea" id="RHEA-COMP:19908"/>
        <dbReference type="ChEBI" id="CHEBI:15377"/>
        <dbReference type="ChEBI" id="CHEBI:15378"/>
        <dbReference type="ChEBI" id="CHEBI:57792"/>
        <dbReference type="ChEBI" id="CHEBI:62899"/>
        <dbReference type="ChEBI" id="CHEBI:77846"/>
        <dbReference type="ChEBI" id="CHEBI:90778"/>
        <dbReference type="ChEBI" id="CHEBI:232372"/>
        <dbReference type="EC" id="2.8.1.10"/>
    </reaction>
</comment>
<comment type="pathway">
    <text evidence="1">Cofactor biosynthesis; thiamine diphosphate biosynthesis.</text>
</comment>
<comment type="subunit">
    <text evidence="1">Homotetramer. Forms heterodimers with either ThiH or ThiS.</text>
</comment>
<comment type="subcellular location">
    <subcellularLocation>
        <location evidence="1">Cytoplasm</location>
    </subcellularLocation>
</comment>
<comment type="similarity">
    <text evidence="1">Belongs to the ThiG family.</text>
</comment>